<accession>Q1WV48</accession>
<sequence>MKITWHGHAFIEIQVAGKQILIDPFITGNPFTKTKPEDLNPDYILLTHSHRDHVGDTEELAKKSGATIVTEMDMVNDYAQKGFKVEGPNYGGTVHFDWGDVKIIPAWHTTANVPLGMATGLALTIEGKLIYIAGDTGLFSDMKLVGRKQQIDLAFLPIGDYYTMGPDDAAYAASLIEAKKVIPDHFNTFPPIKQDVNDFWKDVPENMKFTAEIDKPFEL</sequence>
<organism>
    <name type="scientific">Ligilactobacillus salivarius (strain UCC118)</name>
    <name type="common">Lactobacillus salivarius</name>
    <dbReference type="NCBI Taxonomy" id="362948"/>
    <lineage>
        <taxon>Bacteria</taxon>
        <taxon>Bacillati</taxon>
        <taxon>Bacillota</taxon>
        <taxon>Bacilli</taxon>
        <taxon>Lactobacillales</taxon>
        <taxon>Lactobacillaceae</taxon>
        <taxon>Ligilactobacillus</taxon>
    </lineage>
</organism>
<feature type="chain" id="PRO_0000367186" description="UPF0173 metal-dependent hydrolase LSL_0324">
    <location>
        <begin position="1"/>
        <end position="219"/>
    </location>
</feature>
<dbReference type="EMBL" id="CP000233">
    <property type="protein sequence ID" value="ABD99137.1"/>
    <property type="molecule type" value="Genomic_DNA"/>
</dbReference>
<dbReference type="RefSeq" id="WP_011475685.1">
    <property type="nucleotide sequence ID" value="NC_007929.1"/>
</dbReference>
<dbReference type="RefSeq" id="YP_535220.1">
    <property type="nucleotide sequence ID" value="NC_007929.1"/>
</dbReference>
<dbReference type="SMR" id="Q1WV48"/>
<dbReference type="STRING" id="362948.LSL_0324"/>
<dbReference type="KEGG" id="lsl:LSL_0324"/>
<dbReference type="PATRIC" id="fig|362948.14.peg.399"/>
<dbReference type="HOGENOM" id="CLU_070010_4_1_9"/>
<dbReference type="OrthoDB" id="9789133at2"/>
<dbReference type="Proteomes" id="UP000006559">
    <property type="component" value="Chromosome"/>
</dbReference>
<dbReference type="GO" id="GO:0016787">
    <property type="term" value="F:hydrolase activity"/>
    <property type="evidence" value="ECO:0007669"/>
    <property type="project" value="UniProtKB-UniRule"/>
</dbReference>
<dbReference type="Gene3D" id="3.60.15.10">
    <property type="entry name" value="Ribonuclease Z/Hydroxyacylglutathione hydrolase-like"/>
    <property type="match status" value="1"/>
</dbReference>
<dbReference type="HAMAP" id="MF_00457">
    <property type="entry name" value="UPF0173"/>
    <property type="match status" value="1"/>
</dbReference>
<dbReference type="InterPro" id="IPR001279">
    <property type="entry name" value="Metallo-B-lactamas"/>
</dbReference>
<dbReference type="InterPro" id="IPR036866">
    <property type="entry name" value="RibonucZ/Hydroxyglut_hydro"/>
</dbReference>
<dbReference type="InterPro" id="IPR022877">
    <property type="entry name" value="UPF0173"/>
</dbReference>
<dbReference type="InterPro" id="IPR050114">
    <property type="entry name" value="UPF0173_UPF0282_UlaG_hydrolase"/>
</dbReference>
<dbReference type="NCBIfam" id="NF001911">
    <property type="entry name" value="PRK00685.1"/>
    <property type="match status" value="1"/>
</dbReference>
<dbReference type="PANTHER" id="PTHR43546:SF3">
    <property type="entry name" value="UPF0173 METAL-DEPENDENT HYDROLASE MJ1163"/>
    <property type="match status" value="1"/>
</dbReference>
<dbReference type="PANTHER" id="PTHR43546">
    <property type="entry name" value="UPF0173 METAL-DEPENDENT HYDROLASE MJ1163-RELATED"/>
    <property type="match status" value="1"/>
</dbReference>
<dbReference type="Pfam" id="PF12706">
    <property type="entry name" value="Lactamase_B_2"/>
    <property type="match status" value="1"/>
</dbReference>
<dbReference type="SMART" id="SM00849">
    <property type="entry name" value="Lactamase_B"/>
    <property type="match status" value="1"/>
</dbReference>
<dbReference type="SUPFAM" id="SSF56281">
    <property type="entry name" value="Metallo-hydrolase/oxidoreductase"/>
    <property type="match status" value="1"/>
</dbReference>
<evidence type="ECO:0000255" key="1">
    <source>
        <dbReference type="HAMAP-Rule" id="MF_00457"/>
    </source>
</evidence>
<keyword id="KW-0378">Hydrolase</keyword>
<keyword id="KW-1185">Reference proteome</keyword>
<gene>
    <name type="ordered locus">LSL_0324</name>
</gene>
<reference key="1">
    <citation type="journal article" date="2006" name="Proc. Natl. Acad. Sci. U.S.A.">
        <title>Multireplicon genome architecture of Lactobacillus salivarius.</title>
        <authorList>
            <person name="Claesson M.J."/>
            <person name="Li Y."/>
            <person name="Leahy S."/>
            <person name="Canchaya C."/>
            <person name="van Pijkeren J.P."/>
            <person name="Cerdeno-Tarraga A.M."/>
            <person name="Parkhill J."/>
            <person name="Flynn S."/>
            <person name="O'Sullivan G.C."/>
            <person name="Collins J.K."/>
            <person name="Higgins D."/>
            <person name="Shanahan F."/>
            <person name="Fitzgerald G.F."/>
            <person name="van Sinderen D."/>
            <person name="O'Toole P.W."/>
        </authorList>
    </citation>
    <scope>NUCLEOTIDE SEQUENCE [LARGE SCALE GENOMIC DNA]</scope>
    <source>
        <strain>UCC118</strain>
    </source>
</reference>
<protein>
    <recommendedName>
        <fullName evidence="1">UPF0173 metal-dependent hydrolase LSL_0324</fullName>
    </recommendedName>
</protein>
<comment type="similarity">
    <text evidence="1">Belongs to the UPF0173 family.</text>
</comment>
<name>Y324_LIGS1</name>
<proteinExistence type="inferred from homology"/>